<protein>
    <recommendedName>
        <fullName evidence="1">Large ribosomal subunit protein eL8</fullName>
    </recommendedName>
    <alternativeName>
        <fullName evidence="2">50S ribosomal protein L7Ae</fullName>
    </alternativeName>
    <alternativeName>
        <fullName evidence="1">Ribosomal protein L8e</fullName>
    </alternativeName>
</protein>
<name>RL7A_HALS3</name>
<comment type="function">
    <text evidence="1">Multifunctional RNA-binding protein that recognizes the K-turn motif in ribosomal RNA, the RNA component of RNase P, box H/ACA, box C/D and box C'/D' sRNAs.</text>
</comment>
<comment type="subunit">
    <text evidence="1">Part of the 50S ribosomal subunit. Probably part of the RNase P complex.</text>
</comment>
<comment type="subcellular location">
    <subcellularLocation>
        <location evidence="1">Cytoplasm</location>
    </subcellularLocation>
</comment>
<comment type="similarity">
    <text evidence="1">Belongs to the eukaryotic ribosomal protein eL8 family.</text>
</comment>
<reference key="1">
    <citation type="journal article" date="2008" name="Genomics">
        <title>Evolution in the laboratory: the genome of Halobacterium salinarum strain R1 compared to that of strain NRC-1.</title>
        <authorList>
            <person name="Pfeiffer F."/>
            <person name="Schuster S.C."/>
            <person name="Broicher A."/>
            <person name="Falb M."/>
            <person name="Palm P."/>
            <person name="Rodewald K."/>
            <person name="Ruepp A."/>
            <person name="Soppa J."/>
            <person name="Tittor J."/>
            <person name="Oesterhelt D."/>
        </authorList>
    </citation>
    <scope>NUCLEOTIDE SEQUENCE [LARGE SCALE GENOMIC DNA]</scope>
    <source>
        <strain>ATCC 29341 / DSM 671 / R1</strain>
    </source>
</reference>
<feature type="chain" id="PRO_1000116097" description="Large ribosomal subunit protein eL8">
    <location>
        <begin position="1"/>
        <end position="120"/>
    </location>
</feature>
<keyword id="KW-0963">Cytoplasm</keyword>
<keyword id="KW-0687">Ribonucleoprotein</keyword>
<keyword id="KW-0689">Ribosomal protein</keyword>
<keyword id="KW-0694">RNA-binding</keyword>
<keyword id="KW-0699">rRNA-binding</keyword>
<keyword id="KW-0819">tRNA processing</keyword>
<sequence length="120" mass="12730">MPVYVDYDVPADLQERALESLEVARDTGSVKKGTNETTKAIERGNADIVFVAEDVSPEEIVMHLPELAAEKGIEVVFVETQDELGNAAGLEVGSAAAAVVAAGDAEDEIEDISTKVEDLQ</sequence>
<dbReference type="EMBL" id="AM774415">
    <property type="protein sequence ID" value="CAP13814.1"/>
    <property type="molecule type" value="Genomic_DNA"/>
</dbReference>
<dbReference type="RefSeq" id="WP_010902832.1">
    <property type="nucleotide sequence ID" value="NC_010364.1"/>
</dbReference>
<dbReference type="SMR" id="B0R4Z9"/>
<dbReference type="EnsemblBacteria" id="CAP13814">
    <property type="protein sequence ID" value="CAP13814"/>
    <property type="gene ID" value="OE_2662F"/>
</dbReference>
<dbReference type="GeneID" id="89349513"/>
<dbReference type="KEGG" id="hsl:OE_2662F"/>
<dbReference type="HOGENOM" id="CLU_084513_4_0_2"/>
<dbReference type="PhylomeDB" id="B0R4Z9"/>
<dbReference type="Proteomes" id="UP000001321">
    <property type="component" value="Chromosome"/>
</dbReference>
<dbReference type="GO" id="GO:0005737">
    <property type="term" value="C:cytoplasm"/>
    <property type="evidence" value="ECO:0007669"/>
    <property type="project" value="UniProtKB-SubCell"/>
</dbReference>
<dbReference type="GO" id="GO:1990904">
    <property type="term" value="C:ribonucleoprotein complex"/>
    <property type="evidence" value="ECO:0007669"/>
    <property type="project" value="UniProtKB-KW"/>
</dbReference>
<dbReference type="GO" id="GO:0005840">
    <property type="term" value="C:ribosome"/>
    <property type="evidence" value="ECO:0007669"/>
    <property type="project" value="UniProtKB-KW"/>
</dbReference>
<dbReference type="GO" id="GO:0004526">
    <property type="term" value="F:ribonuclease P activity"/>
    <property type="evidence" value="ECO:0007669"/>
    <property type="project" value="UniProtKB-UniRule"/>
</dbReference>
<dbReference type="GO" id="GO:0019843">
    <property type="term" value="F:rRNA binding"/>
    <property type="evidence" value="ECO:0007669"/>
    <property type="project" value="UniProtKB-KW"/>
</dbReference>
<dbReference type="GO" id="GO:0003735">
    <property type="term" value="F:structural constituent of ribosome"/>
    <property type="evidence" value="ECO:0007669"/>
    <property type="project" value="InterPro"/>
</dbReference>
<dbReference type="GO" id="GO:0006412">
    <property type="term" value="P:translation"/>
    <property type="evidence" value="ECO:0007669"/>
    <property type="project" value="UniProtKB-UniRule"/>
</dbReference>
<dbReference type="GO" id="GO:0001682">
    <property type="term" value="P:tRNA 5'-leader removal"/>
    <property type="evidence" value="ECO:0007669"/>
    <property type="project" value="UniProtKB-UniRule"/>
</dbReference>
<dbReference type="FunFam" id="3.30.1330.30:FF:000020">
    <property type="entry name" value="50S ribosomal protein L7Ae"/>
    <property type="match status" value="1"/>
</dbReference>
<dbReference type="Gene3D" id="3.30.1330.30">
    <property type="match status" value="1"/>
</dbReference>
<dbReference type="HAMAP" id="MF_00326">
    <property type="entry name" value="Ribosomal_eL8"/>
    <property type="match status" value="1"/>
</dbReference>
<dbReference type="InterPro" id="IPR029064">
    <property type="entry name" value="Ribosomal_eL30-like_sf"/>
</dbReference>
<dbReference type="InterPro" id="IPR004038">
    <property type="entry name" value="Ribosomal_eL8/eL30/eS12/Gad45"/>
</dbReference>
<dbReference type="InterPro" id="IPR018492">
    <property type="entry name" value="Ribosomal_eL8/Nhp2"/>
</dbReference>
<dbReference type="InterPro" id="IPR022481">
    <property type="entry name" value="Ribosomal_eL8_arc"/>
</dbReference>
<dbReference type="NCBIfam" id="TIGR03677">
    <property type="entry name" value="eL8_ribo"/>
    <property type="match status" value="1"/>
</dbReference>
<dbReference type="PANTHER" id="PTHR11843">
    <property type="entry name" value="40S RIBOSOMAL PROTEIN S12"/>
    <property type="match status" value="1"/>
</dbReference>
<dbReference type="Pfam" id="PF01248">
    <property type="entry name" value="Ribosomal_L7Ae"/>
    <property type="match status" value="1"/>
</dbReference>
<dbReference type="PRINTS" id="PR00881">
    <property type="entry name" value="L7ARS6FAMILY"/>
</dbReference>
<dbReference type="PRINTS" id="PR00884">
    <property type="entry name" value="RIBOSOMALHS6"/>
</dbReference>
<dbReference type="SUPFAM" id="SSF55315">
    <property type="entry name" value="L30e-like"/>
    <property type="match status" value="1"/>
</dbReference>
<evidence type="ECO:0000255" key="1">
    <source>
        <dbReference type="HAMAP-Rule" id="MF_00326"/>
    </source>
</evidence>
<evidence type="ECO:0000305" key="2"/>
<organism>
    <name type="scientific">Halobacterium salinarum (strain ATCC 29341 / DSM 671 / R1)</name>
    <dbReference type="NCBI Taxonomy" id="478009"/>
    <lineage>
        <taxon>Archaea</taxon>
        <taxon>Methanobacteriati</taxon>
        <taxon>Methanobacteriota</taxon>
        <taxon>Stenosarchaea group</taxon>
        <taxon>Halobacteria</taxon>
        <taxon>Halobacteriales</taxon>
        <taxon>Halobacteriaceae</taxon>
        <taxon>Halobacterium</taxon>
        <taxon>Halobacterium salinarum NRC-34001</taxon>
    </lineage>
</organism>
<proteinExistence type="inferred from homology"/>
<gene>
    <name evidence="1" type="primary">rpl7ae</name>
    <name type="ordered locus">OE_2662F</name>
</gene>
<accession>B0R4Z9</accession>